<accession>Q969V3</accession>
<accession>D6W613</accession>
<accession>O75252</accession>
<accession>Q6FI60</accession>
<accession>Q6ZMB7</accession>
<accession>Q8TAT7</accession>
<accession>Q96H48</accession>
<accession>Q96IS7</accession>
<accession>Q9BQH9</accession>
<accession>Q9BTX4</accession>
<accession>Q9NPP2</accession>
<evidence type="ECO:0000250" key="1">
    <source>
        <dbReference type="UniProtKB" id="Q6NZ07"/>
    </source>
</evidence>
<evidence type="ECO:0000255" key="2"/>
<evidence type="ECO:0000269" key="3">
    <source>
    </source>
</evidence>
<evidence type="ECO:0000269" key="4">
    <source>
    </source>
</evidence>
<evidence type="ECO:0000269" key="5">
    <source>
    </source>
</evidence>
<evidence type="ECO:0000269" key="6">
    <source>
    </source>
</evidence>
<evidence type="ECO:0000269" key="7">
    <source>
    </source>
</evidence>
<evidence type="ECO:0000269" key="8">
    <source ref="6"/>
</evidence>
<evidence type="ECO:0000303" key="9">
    <source>
    </source>
</evidence>
<evidence type="ECO:0000303" key="10">
    <source>
    </source>
</evidence>
<evidence type="ECO:0000303" key="11">
    <source>
    </source>
</evidence>
<evidence type="ECO:0000305" key="12"/>
<evidence type="ECO:0000312" key="13">
    <source>
        <dbReference type="HGNC" id="HGNC:26923"/>
    </source>
</evidence>
<gene>
    <name evidence="11 13" type="primary">NCLN</name>
</gene>
<dbReference type="EMBL" id="AK172848">
    <property type="protein sequence ID" value="BAD18812.1"/>
    <property type="molecule type" value="mRNA"/>
</dbReference>
<dbReference type="EMBL" id="AC005331">
    <property type="protein sequence ID" value="AAC27667.1"/>
    <property type="molecule type" value="Genomic_DNA"/>
</dbReference>
<dbReference type="EMBL" id="AC011547">
    <property type="status" value="NOT_ANNOTATED_CDS"/>
    <property type="molecule type" value="Genomic_DNA"/>
</dbReference>
<dbReference type="EMBL" id="CH471139">
    <property type="protein sequence ID" value="EAW69330.1"/>
    <property type="molecule type" value="Genomic_DNA"/>
</dbReference>
<dbReference type="EMBL" id="CH471139">
    <property type="protein sequence ID" value="EAW69333.1"/>
    <property type="molecule type" value="Genomic_DNA"/>
</dbReference>
<dbReference type="EMBL" id="BC003076">
    <property type="protein sequence ID" value="AAH03076.2"/>
    <property type="status" value="ALT_INIT"/>
    <property type="molecule type" value="mRNA"/>
</dbReference>
<dbReference type="EMBL" id="BC007275">
    <property type="protein sequence ID" value="AAH07275.1"/>
    <property type="molecule type" value="mRNA"/>
</dbReference>
<dbReference type="EMBL" id="BC008920">
    <property type="protein sequence ID" value="AAH08920.2"/>
    <property type="molecule type" value="mRNA"/>
</dbReference>
<dbReference type="EMBL" id="BC010064">
    <property type="protein sequence ID" value="AAH10064.2"/>
    <property type="molecule type" value="mRNA"/>
</dbReference>
<dbReference type="EMBL" id="BC013283">
    <property type="protein sequence ID" value="AAH13283.2"/>
    <property type="molecule type" value="mRNA"/>
</dbReference>
<dbReference type="EMBL" id="BC019091">
    <property type="protein sequence ID" value="AAH19091.2"/>
    <property type="molecule type" value="mRNA"/>
</dbReference>
<dbReference type="EMBL" id="BC025926">
    <property type="protein sequence ID" value="AAH25926.1"/>
    <property type="status" value="ALT_INIT"/>
    <property type="molecule type" value="mRNA"/>
</dbReference>
<dbReference type="EMBL" id="AL136567">
    <property type="protein sequence ID" value="CAB66502.1"/>
    <property type="status" value="ALT_INIT"/>
    <property type="molecule type" value="mRNA"/>
</dbReference>
<dbReference type="EMBL" id="CR533566">
    <property type="protein sequence ID" value="CAG38597.1"/>
    <property type="molecule type" value="mRNA"/>
</dbReference>
<dbReference type="EMBL" id="AL365369">
    <property type="protein sequence ID" value="CAB96945.1"/>
    <property type="molecule type" value="mRNA"/>
</dbReference>
<dbReference type="CCDS" id="CCDS32869.1">
    <molecule id="Q969V3-1"/>
</dbReference>
<dbReference type="RefSeq" id="NP_001308392.1">
    <molecule id="Q969V3-2"/>
    <property type="nucleotide sequence ID" value="NM_001321463.2"/>
</dbReference>
<dbReference type="RefSeq" id="NP_064555.2">
    <molecule id="Q969V3-1"/>
    <property type="nucleotide sequence ID" value="NM_020170.4"/>
</dbReference>
<dbReference type="PDB" id="6W6L">
    <property type="method" value="EM"/>
    <property type="resolution" value="3.84 A"/>
    <property type="chains" value="5=1-563"/>
</dbReference>
<dbReference type="PDB" id="9C7U">
    <property type="method" value="EM"/>
    <property type="resolution" value="3.65 A"/>
    <property type="chains" value="A=1-563"/>
</dbReference>
<dbReference type="PDB" id="9C7V">
    <property type="method" value="EM"/>
    <property type="resolution" value="6.60 A"/>
    <property type="chains" value="A=1-563"/>
</dbReference>
<dbReference type="PDBsum" id="6W6L"/>
<dbReference type="PDBsum" id="9C7U"/>
<dbReference type="PDBsum" id="9C7V"/>
<dbReference type="EMDB" id="EMD-45294"/>
<dbReference type="EMDB" id="EMD-45295"/>
<dbReference type="SMR" id="Q969V3"/>
<dbReference type="BioGRID" id="121253">
    <property type="interactions" value="286"/>
</dbReference>
<dbReference type="ComplexPortal" id="CPX-8021">
    <property type="entry name" value="BOS complex, NOMO1 variant"/>
</dbReference>
<dbReference type="ComplexPortal" id="CPX-8022">
    <property type="entry name" value="BOS complex, NOMO2 variant"/>
</dbReference>
<dbReference type="ComplexPortal" id="CPX-8023">
    <property type="entry name" value="BOS complex, NOMO3 variant"/>
</dbReference>
<dbReference type="CORUM" id="Q969V3"/>
<dbReference type="FunCoup" id="Q969V3">
    <property type="interactions" value="1767"/>
</dbReference>
<dbReference type="IntAct" id="Q969V3">
    <property type="interactions" value="96"/>
</dbReference>
<dbReference type="MINT" id="Q969V3"/>
<dbReference type="STRING" id="9606.ENSP00000246117"/>
<dbReference type="MEROPS" id="M28.978"/>
<dbReference type="TCDB" id="8.A.144.1.1">
    <property type="family name" value="the nicalin (nicalin) family"/>
</dbReference>
<dbReference type="GlyConnect" id="1566">
    <property type="glycosylation" value="5 N-Linked glycans (1 site)"/>
</dbReference>
<dbReference type="GlyCosmos" id="Q969V3">
    <property type="glycosylation" value="2 sites, 4 glycans"/>
</dbReference>
<dbReference type="GlyGen" id="Q969V3">
    <property type="glycosylation" value="4 sites, 11 N-linked glycans (1 site), 1 O-linked glycan (2 sites)"/>
</dbReference>
<dbReference type="iPTMnet" id="Q969V3"/>
<dbReference type="MetOSite" id="Q969V3"/>
<dbReference type="PhosphoSitePlus" id="Q969V3"/>
<dbReference type="SwissPalm" id="Q969V3"/>
<dbReference type="BioMuta" id="NCLN"/>
<dbReference type="DMDM" id="68052797"/>
<dbReference type="jPOST" id="Q969V3"/>
<dbReference type="MassIVE" id="Q969V3"/>
<dbReference type="PaxDb" id="9606-ENSP00000246117"/>
<dbReference type="PeptideAtlas" id="Q969V3"/>
<dbReference type="ProteomicsDB" id="75850">
    <molecule id="Q969V3-1"/>
</dbReference>
<dbReference type="ProteomicsDB" id="75851">
    <molecule id="Q969V3-2"/>
</dbReference>
<dbReference type="Pumba" id="Q969V3"/>
<dbReference type="Antibodypedia" id="1889">
    <property type="antibodies" value="142 antibodies from 33 providers"/>
</dbReference>
<dbReference type="DNASU" id="56926"/>
<dbReference type="Ensembl" id="ENST00000246117.9">
    <molecule id="Q969V3-1"/>
    <property type="protein sequence ID" value="ENSP00000246117.3"/>
    <property type="gene ID" value="ENSG00000125912.11"/>
</dbReference>
<dbReference type="GeneID" id="56926"/>
<dbReference type="KEGG" id="hsa:56926"/>
<dbReference type="MANE-Select" id="ENST00000246117.9">
    <property type="protein sequence ID" value="ENSP00000246117.3"/>
    <property type="RefSeq nucleotide sequence ID" value="NM_020170.4"/>
    <property type="RefSeq protein sequence ID" value="NP_064555.2"/>
</dbReference>
<dbReference type="UCSC" id="uc002lxi.4">
    <molecule id="Q969V3-1"/>
    <property type="organism name" value="human"/>
</dbReference>
<dbReference type="AGR" id="HGNC:26923"/>
<dbReference type="CTD" id="56926"/>
<dbReference type="DisGeNET" id="56926"/>
<dbReference type="GeneCards" id="NCLN"/>
<dbReference type="HGNC" id="HGNC:26923">
    <property type="gene designation" value="NCLN"/>
</dbReference>
<dbReference type="HPA" id="ENSG00000125912">
    <property type="expression patterns" value="Low tissue specificity"/>
</dbReference>
<dbReference type="MIM" id="609156">
    <property type="type" value="gene"/>
</dbReference>
<dbReference type="neXtProt" id="NX_Q969V3"/>
<dbReference type="OpenTargets" id="ENSG00000125912"/>
<dbReference type="PharmGKB" id="PA134898417"/>
<dbReference type="VEuPathDB" id="HostDB:ENSG00000125912"/>
<dbReference type="eggNOG" id="KOG2526">
    <property type="taxonomic scope" value="Eukaryota"/>
</dbReference>
<dbReference type="GeneTree" id="ENSGT00500000044945"/>
<dbReference type="HOGENOM" id="CLU_034102_2_0_1"/>
<dbReference type="InParanoid" id="Q969V3"/>
<dbReference type="OMA" id="WSTSRHC"/>
<dbReference type="OrthoDB" id="5913609at2759"/>
<dbReference type="PAN-GO" id="Q969V3">
    <property type="GO annotations" value="2 GO annotations based on evolutionary models"/>
</dbReference>
<dbReference type="PhylomeDB" id="Q969V3"/>
<dbReference type="TreeFam" id="TF105849"/>
<dbReference type="PathwayCommons" id="Q969V3"/>
<dbReference type="SignaLink" id="Q969V3"/>
<dbReference type="BioGRID-ORCS" id="56926">
    <property type="hits" value="43 hits in 1166 CRISPR screens"/>
</dbReference>
<dbReference type="ChiTaRS" id="NCLN">
    <property type="organism name" value="human"/>
</dbReference>
<dbReference type="GeneWiki" id="NCLN"/>
<dbReference type="GenomeRNAi" id="56926"/>
<dbReference type="Pharos" id="Q969V3">
    <property type="development level" value="Tbio"/>
</dbReference>
<dbReference type="PRO" id="PR:Q969V3"/>
<dbReference type="Proteomes" id="UP000005640">
    <property type="component" value="Chromosome 19"/>
</dbReference>
<dbReference type="RNAct" id="Q969V3">
    <property type="molecule type" value="protein"/>
</dbReference>
<dbReference type="Bgee" id="ENSG00000125912">
    <property type="expression patterns" value="Expressed in mucosa of transverse colon and 127 other cell types or tissues"/>
</dbReference>
<dbReference type="ExpressionAtlas" id="Q969V3">
    <property type="expression patterns" value="baseline and differential"/>
</dbReference>
<dbReference type="GO" id="GO:0005789">
    <property type="term" value="C:endoplasmic reticulum membrane"/>
    <property type="evidence" value="ECO:0000314"/>
    <property type="project" value="UniProtKB"/>
</dbReference>
<dbReference type="GO" id="GO:0016020">
    <property type="term" value="C:membrane"/>
    <property type="evidence" value="ECO:0007005"/>
    <property type="project" value="UniProtKB"/>
</dbReference>
<dbReference type="GO" id="GO:0160064">
    <property type="term" value="C:multi-pass translocon complex"/>
    <property type="evidence" value="ECO:0000314"/>
    <property type="project" value="UniProtKB"/>
</dbReference>
<dbReference type="GO" id="GO:0032991">
    <property type="term" value="C:protein-containing complex"/>
    <property type="evidence" value="ECO:0000314"/>
    <property type="project" value="UniProtKB"/>
</dbReference>
<dbReference type="GO" id="GO:0043022">
    <property type="term" value="F:ribosome binding"/>
    <property type="evidence" value="ECO:0000314"/>
    <property type="project" value="UniProtKB"/>
</dbReference>
<dbReference type="GO" id="GO:0003140">
    <property type="term" value="P:determination of left/right asymmetry in lateral mesoderm"/>
    <property type="evidence" value="ECO:0000250"/>
    <property type="project" value="BHF-UCL"/>
</dbReference>
<dbReference type="GO" id="GO:0160063">
    <property type="term" value="P:multi-pass transmembrane protein insertion into ER membrane"/>
    <property type="evidence" value="ECO:0000314"/>
    <property type="project" value="UniProtKB"/>
</dbReference>
<dbReference type="GO" id="GO:1900108">
    <property type="term" value="P:negative regulation of nodal signaling pathway"/>
    <property type="evidence" value="ECO:0000250"/>
    <property type="project" value="BHF-UCL"/>
</dbReference>
<dbReference type="GO" id="GO:0050821">
    <property type="term" value="P:protein stabilization"/>
    <property type="evidence" value="ECO:0000315"/>
    <property type="project" value="UniProtKB"/>
</dbReference>
<dbReference type="GO" id="GO:0061635">
    <property type="term" value="P:regulation of protein complex stability"/>
    <property type="evidence" value="ECO:0000314"/>
    <property type="project" value="UniProtKB"/>
</dbReference>
<dbReference type="GO" id="GO:0043254">
    <property type="term" value="P:regulation of protein-containing complex assembly"/>
    <property type="evidence" value="ECO:0000314"/>
    <property type="project" value="UniProtKB"/>
</dbReference>
<dbReference type="GO" id="GO:0009966">
    <property type="term" value="P:regulation of signal transduction"/>
    <property type="evidence" value="ECO:0000318"/>
    <property type="project" value="GO_Central"/>
</dbReference>
<dbReference type="CDD" id="cd03882">
    <property type="entry name" value="M28_nicalin_like"/>
    <property type="match status" value="1"/>
</dbReference>
<dbReference type="FunFam" id="3.40.630.10:FF:000021">
    <property type="entry name" value="Nicalin"/>
    <property type="match status" value="1"/>
</dbReference>
<dbReference type="Gene3D" id="3.40.630.10">
    <property type="entry name" value="Zn peptidases"/>
    <property type="match status" value="1"/>
</dbReference>
<dbReference type="InterPro" id="IPR016574">
    <property type="entry name" value="Nicalin"/>
</dbReference>
<dbReference type="InterPro" id="IPR007484">
    <property type="entry name" value="Peptidase_M28"/>
</dbReference>
<dbReference type="PANTHER" id="PTHR31826">
    <property type="entry name" value="NICALIN"/>
    <property type="match status" value="1"/>
</dbReference>
<dbReference type="Pfam" id="PF04389">
    <property type="entry name" value="Peptidase_M28"/>
    <property type="match status" value="1"/>
</dbReference>
<dbReference type="PIRSF" id="PIRSF011018">
    <property type="entry name" value="Nicalin"/>
    <property type="match status" value="1"/>
</dbReference>
<dbReference type="SUPFAM" id="SSF53187">
    <property type="entry name" value="Zn-dependent exopeptidases"/>
    <property type="match status" value="1"/>
</dbReference>
<proteinExistence type="evidence at protein level"/>
<reference key="1">
    <citation type="journal article" date="2004" name="Nat. Genet.">
        <title>Complete sequencing and characterization of 21,243 full-length human cDNAs.</title>
        <authorList>
            <person name="Ota T."/>
            <person name="Suzuki Y."/>
            <person name="Nishikawa T."/>
            <person name="Otsuki T."/>
            <person name="Sugiyama T."/>
            <person name="Irie R."/>
            <person name="Wakamatsu A."/>
            <person name="Hayashi K."/>
            <person name="Sato H."/>
            <person name="Nagai K."/>
            <person name="Kimura K."/>
            <person name="Makita H."/>
            <person name="Sekine M."/>
            <person name="Obayashi M."/>
            <person name="Nishi T."/>
            <person name="Shibahara T."/>
            <person name="Tanaka T."/>
            <person name="Ishii S."/>
            <person name="Yamamoto J."/>
            <person name="Saito K."/>
            <person name="Kawai Y."/>
            <person name="Isono Y."/>
            <person name="Nakamura Y."/>
            <person name="Nagahari K."/>
            <person name="Murakami K."/>
            <person name="Yasuda T."/>
            <person name="Iwayanagi T."/>
            <person name="Wagatsuma M."/>
            <person name="Shiratori A."/>
            <person name="Sudo H."/>
            <person name="Hosoiri T."/>
            <person name="Kaku Y."/>
            <person name="Kodaira H."/>
            <person name="Kondo H."/>
            <person name="Sugawara M."/>
            <person name="Takahashi M."/>
            <person name="Kanda K."/>
            <person name="Yokoi T."/>
            <person name="Furuya T."/>
            <person name="Kikkawa E."/>
            <person name="Omura Y."/>
            <person name="Abe K."/>
            <person name="Kamihara K."/>
            <person name="Katsuta N."/>
            <person name="Sato K."/>
            <person name="Tanikawa M."/>
            <person name="Yamazaki M."/>
            <person name="Ninomiya K."/>
            <person name="Ishibashi T."/>
            <person name="Yamashita H."/>
            <person name="Murakawa K."/>
            <person name="Fujimori K."/>
            <person name="Tanai H."/>
            <person name="Kimata M."/>
            <person name="Watanabe M."/>
            <person name="Hiraoka S."/>
            <person name="Chiba Y."/>
            <person name="Ishida S."/>
            <person name="Ono Y."/>
            <person name="Takiguchi S."/>
            <person name="Watanabe S."/>
            <person name="Yosida M."/>
            <person name="Hotuta T."/>
            <person name="Kusano J."/>
            <person name="Kanehori K."/>
            <person name="Takahashi-Fujii A."/>
            <person name="Hara H."/>
            <person name="Tanase T.-O."/>
            <person name="Nomura Y."/>
            <person name="Togiya S."/>
            <person name="Komai F."/>
            <person name="Hara R."/>
            <person name="Takeuchi K."/>
            <person name="Arita M."/>
            <person name="Imose N."/>
            <person name="Musashino K."/>
            <person name="Yuuki H."/>
            <person name="Oshima A."/>
            <person name="Sasaki N."/>
            <person name="Aotsuka S."/>
            <person name="Yoshikawa Y."/>
            <person name="Matsunawa H."/>
            <person name="Ichihara T."/>
            <person name="Shiohata N."/>
            <person name="Sano S."/>
            <person name="Moriya S."/>
            <person name="Momiyama H."/>
            <person name="Satoh N."/>
            <person name="Takami S."/>
            <person name="Terashima Y."/>
            <person name="Suzuki O."/>
            <person name="Nakagawa S."/>
            <person name="Senoh A."/>
            <person name="Mizoguchi H."/>
            <person name="Goto Y."/>
            <person name="Shimizu F."/>
            <person name="Wakebe H."/>
            <person name="Hishigaki H."/>
            <person name="Watanabe T."/>
            <person name="Sugiyama A."/>
            <person name="Takemoto M."/>
            <person name="Kawakami B."/>
            <person name="Yamazaki M."/>
            <person name="Watanabe K."/>
            <person name="Kumagai A."/>
            <person name="Itakura S."/>
            <person name="Fukuzumi Y."/>
            <person name="Fujimori Y."/>
            <person name="Komiyama M."/>
            <person name="Tashiro H."/>
            <person name="Tanigami A."/>
            <person name="Fujiwara T."/>
            <person name="Ono T."/>
            <person name="Yamada K."/>
            <person name="Fujii Y."/>
            <person name="Ozaki K."/>
            <person name="Hirao M."/>
            <person name="Ohmori Y."/>
            <person name="Kawabata A."/>
            <person name="Hikiji T."/>
            <person name="Kobatake N."/>
            <person name="Inagaki H."/>
            <person name="Ikema Y."/>
            <person name="Okamoto S."/>
            <person name="Okitani R."/>
            <person name="Kawakami T."/>
            <person name="Noguchi S."/>
            <person name="Itoh T."/>
            <person name="Shigeta K."/>
            <person name="Senba T."/>
            <person name="Matsumura K."/>
            <person name="Nakajima Y."/>
            <person name="Mizuno T."/>
            <person name="Morinaga M."/>
            <person name="Sasaki M."/>
            <person name="Togashi T."/>
            <person name="Oyama M."/>
            <person name="Hata H."/>
            <person name="Watanabe M."/>
            <person name="Komatsu T."/>
            <person name="Mizushima-Sugano J."/>
            <person name="Satoh T."/>
            <person name="Shirai Y."/>
            <person name="Takahashi Y."/>
            <person name="Nakagawa K."/>
            <person name="Okumura K."/>
            <person name="Nagase T."/>
            <person name="Nomura N."/>
            <person name="Kikuchi H."/>
            <person name="Masuho Y."/>
            <person name="Yamashita R."/>
            <person name="Nakai K."/>
            <person name="Yada T."/>
            <person name="Nakamura Y."/>
            <person name="Ohara O."/>
            <person name="Isogai T."/>
            <person name="Sugano S."/>
        </authorList>
    </citation>
    <scope>NUCLEOTIDE SEQUENCE [LARGE SCALE MRNA] (ISOFORM 1)</scope>
    <source>
        <tissue>Carcinoma</tissue>
    </source>
</reference>
<reference key="2">
    <citation type="journal article" date="2004" name="Nature">
        <title>The DNA sequence and biology of human chromosome 19.</title>
        <authorList>
            <person name="Grimwood J."/>
            <person name="Gordon L.A."/>
            <person name="Olsen A.S."/>
            <person name="Terry A."/>
            <person name="Schmutz J."/>
            <person name="Lamerdin J.E."/>
            <person name="Hellsten U."/>
            <person name="Goodstein D."/>
            <person name="Couronne O."/>
            <person name="Tran-Gyamfi M."/>
            <person name="Aerts A."/>
            <person name="Altherr M."/>
            <person name="Ashworth L."/>
            <person name="Bajorek E."/>
            <person name="Black S."/>
            <person name="Branscomb E."/>
            <person name="Caenepeel S."/>
            <person name="Carrano A.V."/>
            <person name="Caoile C."/>
            <person name="Chan Y.M."/>
            <person name="Christensen M."/>
            <person name="Cleland C.A."/>
            <person name="Copeland A."/>
            <person name="Dalin E."/>
            <person name="Dehal P."/>
            <person name="Denys M."/>
            <person name="Detter J.C."/>
            <person name="Escobar J."/>
            <person name="Flowers D."/>
            <person name="Fotopulos D."/>
            <person name="Garcia C."/>
            <person name="Georgescu A.M."/>
            <person name="Glavina T."/>
            <person name="Gomez M."/>
            <person name="Gonzales E."/>
            <person name="Groza M."/>
            <person name="Hammon N."/>
            <person name="Hawkins T."/>
            <person name="Haydu L."/>
            <person name="Ho I."/>
            <person name="Huang W."/>
            <person name="Israni S."/>
            <person name="Jett J."/>
            <person name="Kadner K."/>
            <person name="Kimball H."/>
            <person name="Kobayashi A."/>
            <person name="Larionov V."/>
            <person name="Leem S.-H."/>
            <person name="Lopez F."/>
            <person name="Lou Y."/>
            <person name="Lowry S."/>
            <person name="Malfatti S."/>
            <person name="Martinez D."/>
            <person name="McCready P.M."/>
            <person name="Medina C."/>
            <person name="Morgan J."/>
            <person name="Nelson K."/>
            <person name="Nolan M."/>
            <person name="Ovcharenko I."/>
            <person name="Pitluck S."/>
            <person name="Pollard M."/>
            <person name="Popkie A.P."/>
            <person name="Predki P."/>
            <person name="Quan G."/>
            <person name="Ramirez L."/>
            <person name="Rash S."/>
            <person name="Retterer J."/>
            <person name="Rodriguez A."/>
            <person name="Rogers S."/>
            <person name="Salamov A."/>
            <person name="Salazar A."/>
            <person name="She X."/>
            <person name="Smith D."/>
            <person name="Slezak T."/>
            <person name="Solovyev V."/>
            <person name="Thayer N."/>
            <person name="Tice H."/>
            <person name="Tsai M."/>
            <person name="Ustaszewska A."/>
            <person name="Vo N."/>
            <person name="Wagner M."/>
            <person name="Wheeler J."/>
            <person name="Wu K."/>
            <person name="Xie G."/>
            <person name="Yang J."/>
            <person name="Dubchak I."/>
            <person name="Furey T.S."/>
            <person name="DeJong P."/>
            <person name="Dickson M."/>
            <person name="Gordon D."/>
            <person name="Eichler E.E."/>
            <person name="Pennacchio L.A."/>
            <person name="Richardson P."/>
            <person name="Stubbs L."/>
            <person name="Rokhsar D.S."/>
            <person name="Myers R.M."/>
            <person name="Rubin E.M."/>
            <person name="Lucas S.M."/>
        </authorList>
    </citation>
    <scope>NUCLEOTIDE SEQUENCE [LARGE SCALE GENOMIC DNA]</scope>
</reference>
<reference key="3">
    <citation type="submission" date="2005-09" db="EMBL/GenBank/DDBJ databases">
        <authorList>
            <person name="Mural R.J."/>
            <person name="Istrail S."/>
            <person name="Sutton G.G."/>
            <person name="Florea L."/>
            <person name="Halpern A.L."/>
            <person name="Mobarry C.M."/>
            <person name="Lippert R."/>
            <person name="Walenz B."/>
            <person name="Shatkay H."/>
            <person name="Dew I."/>
            <person name="Miller J.R."/>
            <person name="Flanigan M.J."/>
            <person name="Edwards N.J."/>
            <person name="Bolanos R."/>
            <person name="Fasulo D."/>
            <person name="Halldorsson B.V."/>
            <person name="Hannenhalli S."/>
            <person name="Turner R."/>
            <person name="Yooseph S."/>
            <person name="Lu F."/>
            <person name="Nusskern D.R."/>
            <person name="Shue B.C."/>
            <person name="Zheng X.H."/>
            <person name="Zhong F."/>
            <person name="Delcher A.L."/>
            <person name="Huson D.H."/>
            <person name="Kravitz S.A."/>
            <person name="Mouchard L."/>
            <person name="Reinert K."/>
            <person name="Remington K.A."/>
            <person name="Clark A.G."/>
            <person name="Waterman M.S."/>
            <person name="Eichler E.E."/>
            <person name="Adams M.D."/>
            <person name="Hunkapiller M.W."/>
            <person name="Myers E.W."/>
            <person name="Venter J.C."/>
        </authorList>
    </citation>
    <scope>NUCLEOTIDE SEQUENCE [LARGE SCALE GENOMIC DNA]</scope>
</reference>
<reference key="4">
    <citation type="journal article" date="2004" name="Genome Res.">
        <title>The status, quality, and expansion of the NIH full-length cDNA project: the Mammalian Gene Collection (MGC).</title>
        <authorList>
            <consortium name="The MGC Project Team"/>
        </authorList>
    </citation>
    <scope>NUCLEOTIDE SEQUENCE [LARGE SCALE MRNA] (ISOFORMS 1 AND 2)</scope>
    <source>
        <tissue>Brain</tissue>
        <tissue>Kidney</tissue>
        <tissue>Ovary</tissue>
    </source>
</reference>
<reference key="5">
    <citation type="journal article" date="2001" name="Genome Res.">
        <title>Towards a catalog of human genes and proteins: sequencing and analysis of 500 novel complete protein coding human cDNAs.</title>
        <authorList>
            <person name="Wiemann S."/>
            <person name="Weil B."/>
            <person name="Wellenreuther R."/>
            <person name="Gassenhuber J."/>
            <person name="Glassl S."/>
            <person name="Ansorge W."/>
            <person name="Boecher M."/>
            <person name="Bloecker H."/>
            <person name="Bauersachs S."/>
            <person name="Blum H."/>
            <person name="Lauber J."/>
            <person name="Duesterhoeft A."/>
            <person name="Beyer A."/>
            <person name="Koehrer K."/>
            <person name="Strack N."/>
            <person name="Mewes H.-W."/>
            <person name="Ottenwaelder B."/>
            <person name="Obermaier B."/>
            <person name="Tampe J."/>
            <person name="Heubner D."/>
            <person name="Wambutt R."/>
            <person name="Korn B."/>
            <person name="Klein M."/>
            <person name="Poustka A."/>
        </authorList>
    </citation>
    <scope>NUCLEOTIDE SEQUENCE [LARGE SCALE MRNA] OF 6-563 (ISOFORM 1)</scope>
    <scope>VARIANT ARG-551</scope>
</reference>
<reference key="6">
    <citation type="submission" date="2004-06" db="EMBL/GenBank/DDBJ databases">
        <title>Cloning of human full open reading frames in Gateway(TM) system entry vector (pDONR201).</title>
        <authorList>
            <person name="Ebert L."/>
            <person name="Schick M."/>
            <person name="Neubert P."/>
            <person name="Schatten R."/>
            <person name="Henze S."/>
            <person name="Korn B."/>
        </authorList>
    </citation>
    <scope>NUCLEOTIDE SEQUENCE [LARGE SCALE MRNA] OF 12-563 (ISOFORM 1)</scope>
    <scope>VARIANT ARG-551</scope>
</reference>
<reference key="7">
    <citation type="submission" date="2000-07" db="EMBL/GenBank/DDBJ databases">
        <authorList>
            <consortium name="The European IMAGE consortium"/>
        </authorList>
    </citation>
    <scope>NUCLEOTIDE SEQUENCE [LARGE SCALE MRNA] OF 502-563</scope>
</reference>
<reference key="8">
    <citation type="journal article" date="2004" name="EMBO J.">
        <title>Nicalin and its binding partner Nomo are novel Nodal signaling antagonists.</title>
        <authorList>
            <person name="Haffner C."/>
            <person name="Frauli M."/>
            <person name="Topp S."/>
            <person name="Irmler M."/>
            <person name="Hofmann K."/>
            <person name="Regula J.T."/>
            <person name="Bally-Cuif L."/>
            <person name="Haass C."/>
        </authorList>
    </citation>
    <scope>SUBCELLULAR LOCATION</scope>
    <scope>TISSUE SPECIFICITY</scope>
    <scope>INTERACTION WITH NOMO</scope>
</reference>
<reference key="9">
    <citation type="journal article" date="2010" name="J. Biol. Chem.">
        <title>Transmembrane protein 147 (TMEM147) is a novel component of the Nicalin-NOMO protein complex.</title>
        <authorList>
            <person name="Dettmer U."/>
            <person name="Kuhn P.H."/>
            <person name="Abou-Ajram C."/>
            <person name="Lichtenthaler S.F."/>
            <person name="Kruger M."/>
            <person name="Kremmer E."/>
            <person name="Haass C."/>
            <person name="Haffner C."/>
        </authorList>
    </citation>
    <scope>SUBCELLULAR LOCATION</scope>
    <scope>INTERACTION WITH NOMO AND TMEM147</scope>
</reference>
<reference key="10">
    <citation type="journal article" date="2011" name="BMC Syst. Biol.">
        <title>Initial characterization of the human central proteome.</title>
        <authorList>
            <person name="Burkard T.R."/>
            <person name="Planyavsky M."/>
            <person name="Kaupe I."/>
            <person name="Breitwieser F.P."/>
            <person name="Buerckstuemmer T."/>
            <person name="Bennett K.L."/>
            <person name="Superti-Furga G."/>
            <person name="Colinge J."/>
        </authorList>
    </citation>
    <scope>IDENTIFICATION BY MASS SPECTROMETRY [LARGE SCALE ANALYSIS]</scope>
</reference>
<reference key="11">
    <citation type="journal article" date="2015" name="Proteomics">
        <title>N-terminome analysis of the human mitochondrial proteome.</title>
        <authorList>
            <person name="Vaca Jacome A.S."/>
            <person name="Rabilloud T."/>
            <person name="Schaeffer-Reiss C."/>
            <person name="Rompais M."/>
            <person name="Ayoub D."/>
            <person name="Lane L."/>
            <person name="Bairoch A."/>
            <person name="Van Dorsselaer A."/>
            <person name="Carapito C."/>
        </authorList>
    </citation>
    <scope>IDENTIFICATION BY MASS SPECTROMETRY [LARGE SCALE ANALYSIS]</scope>
</reference>
<reference key="12">
    <citation type="journal article" date="2022" name="Nature">
        <title>Substrate-driven assembly of a translocon for multipass membrane proteins.</title>
        <authorList>
            <person name="Sundaram A."/>
            <person name="Yamsek M."/>
            <person name="Zhong F."/>
            <person name="Hooda Y."/>
            <person name="Hegde R.S."/>
            <person name="Keenan R.J."/>
        </authorList>
    </citation>
    <scope>FUNCTION</scope>
    <scope>IDENTIFICATION IN THE MULTI-PASS TRANSLOCON COMPLEX</scope>
    <scope>SUBCELLULAR LOCATION</scope>
</reference>
<reference key="13">
    <citation type="journal article" date="2020" name="Elife">
        <title>An ER translocon for multi-pass membrane protein biogenesis.</title>
        <authorList>
            <person name="McGilvray P.T."/>
            <person name="Anghel S.A."/>
            <person name="Sundaram A."/>
            <person name="Zhong F."/>
            <person name="Trnka M.J."/>
            <person name="Fuller J.R."/>
            <person name="Hu H."/>
            <person name="Burlingame A.L."/>
            <person name="Keenan R.J."/>
        </authorList>
    </citation>
    <scope>STRUCTURE BY ELECTRON MICROSCOPY (3.8 ANGSTROMS) OF 52-239 IN COMPLEX WITH THE RIBOSOME-ASSOCIATED ER TRANSLOCON COMPLEX</scope>
    <scope>FUNCTION</scope>
    <scope>INTERACTION WITH TMCO1; CCDC47; NOMO; TMEM147; SEC61A1; SEC61B AND SEC61G</scope>
</reference>
<sequence length="563" mass="62974">MLEEAGEVLENMLKASCLPLGFIVFLPAVLLLVAPPLPAADAAHEFTVYRMQQYDLQGQPYGTRNAVLNTEARTMAAEVLSRRCVLMRLLDFSYEQYQKALRQSAGAVVIILPRAMAAVPQDVVRQFMEIEPEMLAMETAVPVYFAVEDEALLSIYKQTQAASASQGSASAAEVLLRTATANGFQMVTSGVQSKAVSDWLIASVEGRLTGLGGEDLPTIVIVAHYDAFGVAPWLSLGADSNGSGVSVLLELARLFSRLYTYKRTHAAYNLLFFASGGGKFNYQGTKRWLEDNLDHTDSSLLQDNVAFVLCLDTVGRGSSLHLHVSKPPREGTLQHAFLRELETVAAHQFPEVRFSMVHKRINLAEDVLAWEHERFAIRRLPAFTLSHLESHRDGQRSSIMDVRSRVDSKTLTRNTRIIAEALTRVIYNLTEKGTPPDMPVFTEQMQIQQEQLDSVMDWLTNQPRAAQLVDKDSTFLSTLEHHLSRYLKDVKQHHVKADKRDPEFVFYDQLKQVMNAYRVKPAVFDLLLAVGIAAYLGMAYVAVQHFSLLYKTVQRLLVKAKTQ</sequence>
<keyword id="KW-0002">3D-structure</keyword>
<keyword id="KW-0025">Alternative splicing</keyword>
<keyword id="KW-0256">Endoplasmic reticulum</keyword>
<keyword id="KW-0325">Glycoprotein</keyword>
<keyword id="KW-0472">Membrane</keyword>
<keyword id="KW-1267">Proteomics identification</keyword>
<keyword id="KW-1185">Reference proteome</keyword>
<keyword id="KW-0732">Signal</keyword>
<keyword id="KW-0812">Transmembrane</keyword>
<keyword id="KW-1133">Transmembrane helix</keyword>
<comment type="function">
    <text evidence="1 6 7">Component of the multi-pass translocon (MPT) complex that mediates insertion of multi-pass membrane proteins into the lipid bilayer of membranes (PubMed:32820719, PubMed:36261522). The MPT complex takes over after the SEC61 complex: following membrane insertion of the first few transmembrane segments of proteins by the SEC61 complex, the MPT complex occludes the lateral gate of the SEC61 complex to promote insertion of subsequent transmembrane regions (PubMed:36261522). May antagonize Nodal signaling and subsequent organization of axial structures during mesodermal patterning, via its interaction with NOMO (By similarity).</text>
</comment>
<comment type="subunit">
    <text evidence="4 5 6 7">Component of the back of Sec61 (BOS) complex, composed of NCLN/Nicalin, NOMO (NOMO1, NOMO2 or NOMO3) and TMEM147 (PubMed:15257293, PubMed:20538592, PubMed:36261522). The BOS complex is part of the multi-pass translocon (MPT) complex, composed of three subcomplexes, the GEL complex (composed of RAB5IF/OPTI and TMCO1), the BOS complex (composed of NCLN/Nicalin, NOMO and TMEM147) and the PAT complex (composed of WDR83OS/Asterix and CCDC47) (PubMed:32820719, PubMed:36261522). The MPT complex associates with the SEC61 complex (PubMed:32820719, PubMed:36261522).</text>
</comment>
<comment type="interaction">
    <interactant intactId="EBI-1056979">
        <id>Q969V3</id>
    </interactant>
    <interactant intactId="EBI-466029">
        <id>P42858</id>
        <label>HTT</label>
    </interactant>
    <organismsDiffer>false</organismsDiffer>
    <experiments>9</experiments>
</comment>
<comment type="interaction">
    <interactant intactId="EBI-1056979">
        <id>Q969V3</id>
    </interactant>
    <interactant intactId="EBI-720609">
        <id>O76024</id>
        <label>WFS1</label>
    </interactant>
    <organismsDiffer>false</organismsDiffer>
    <experiments>3</experiments>
</comment>
<comment type="interaction">
    <interactant intactId="EBI-10281480">
        <id>Q969V3-2</id>
    </interactant>
    <interactant intactId="EBI-3958099">
        <id>P26371</id>
        <label>KRTAP5-9</label>
    </interactant>
    <organismsDiffer>false</organismsDiffer>
    <experiments>3</experiments>
</comment>
<comment type="subcellular location">
    <subcellularLocation>
        <location evidence="4 5">Endoplasmic reticulum membrane</location>
        <topology evidence="4 5">Single-pass membrane protein</topology>
    </subcellularLocation>
</comment>
<comment type="alternative products">
    <event type="alternative splicing"/>
    <isoform>
        <id>Q969V3-1</id>
        <name>1</name>
        <sequence type="displayed"/>
    </isoform>
    <isoform>
        <id>Q969V3-2</id>
        <name>2</name>
        <sequence type="described" ref="VSP_013851"/>
    </isoform>
</comment>
<comment type="tissue specificity">
    <text evidence="4">Highly expressed in pancreas and skeletal muscle and, at lower levels, in heart.</text>
</comment>
<comment type="similarity">
    <text evidence="12">Belongs to the nicastrin family.</text>
</comment>
<comment type="sequence caution" evidence="12">
    <conflict type="erroneous initiation">
        <sequence resource="EMBL-CDS" id="AAH03076"/>
    </conflict>
    <text>Truncated N-terminus.</text>
</comment>
<comment type="sequence caution" evidence="12">
    <conflict type="erroneous initiation">
        <sequence resource="EMBL-CDS" id="AAH25926"/>
    </conflict>
    <text>Truncated N-terminus.</text>
</comment>
<comment type="sequence caution" evidence="12">
    <conflict type="erroneous initiation">
        <sequence resource="EMBL-CDS" id="CAB66502"/>
    </conflict>
    <text>Truncated N-terminus.</text>
</comment>
<name>NCLN_HUMAN</name>
<organism>
    <name type="scientific">Homo sapiens</name>
    <name type="common">Human</name>
    <dbReference type="NCBI Taxonomy" id="9606"/>
    <lineage>
        <taxon>Eukaryota</taxon>
        <taxon>Metazoa</taxon>
        <taxon>Chordata</taxon>
        <taxon>Craniata</taxon>
        <taxon>Vertebrata</taxon>
        <taxon>Euteleostomi</taxon>
        <taxon>Mammalia</taxon>
        <taxon>Eutheria</taxon>
        <taxon>Euarchontoglires</taxon>
        <taxon>Primates</taxon>
        <taxon>Haplorrhini</taxon>
        <taxon>Catarrhini</taxon>
        <taxon>Hominidae</taxon>
        <taxon>Homo</taxon>
    </lineage>
</organism>
<feature type="signal peptide" evidence="2">
    <location>
        <begin position="1"/>
        <end position="42"/>
    </location>
</feature>
<feature type="chain" id="PRO_0000019687" description="BOS complex subunit NCLN">
    <location>
        <begin position="43"/>
        <end position="563"/>
    </location>
</feature>
<feature type="topological domain" description="Lumenal" evidence="2">
    <location>
        <begin position="43"/>
        <end position="522"/>
    </location>
</feature>
<feature type="transmembrane region" description="Helical" evidence="2">
    <location>
        <begin position="523"/>
        <end position="543"/>
    </location>
</feature>
<feature type="topological domain" description="Cytoplasmic" evidence="2">
    <location>
        <begin position="544"/>
        <end position="563"/>
    </location>
</feature>
<feature type="glycosylation site" description="N-linked (GlcNAc...) asparagine" evidence="2">
    <location>
        <position position="241"/>
    </location>
</feature>
<feature type="glycosylation site" description="N-linked (GlcNAc...) asparagine" evidence="2">
    <location>
        <position position="428"/>
    </location>
</feature>
<feature type="splice variant" id="VSP_013851" description="In isoform 2." evidence="10">
    <location>
        <position position="446"/>
    </location>
</feature>
<feature type="sequence variant" id="VAR_050276" description="In dbSNP:rs11671067.">
    <original>E</original>
    <variation>D</variation>
    <location>
        <position position="214"/>
    </location>
</feature>
<feature type="sequence variant" id="VAR_022552" description="In dbSNP:rs2288949." evidence="3 8">
    <original>K</original>
    <variation>R</variation>
    <location>
        <position position="551"/>
    </location>
</feature>
<feature type="sequence conflict" description="In Ref. 6; CAG38597." evidence="12" ref="6">
    <original>P</original>
    <variation>L</variation>
    <location>
        <position position="19"/>
    </location>
</feature>
<feature type="sequence conflict" description="In Ref. 1; BAD18812." evidence="12" ref="1">
    <original>V</original>
    <variation>A</variation>
    <location>
        <position position="124"/>
    </location>
</feature>
<feature type="sequence conflict" description="In Ref. 6; CAG38597." evidence="12" ref="6">
    <original>R</original>
    <variation>W</variation>
    <location>
        <position position="207"/>
    </location>
</feature>
<feature type="sequence conflict" description="In Ref. 4; AAH03076." evidence="12" ref="4">
    <original>H</original>
    <variation>L</variation>
    <location>
        <position position="387"/>
    </location>
</feature>
<protein>
    <recommendedName>
        <fullName evidence="12">BOS complex subunit NCLN</fullName>
    </recommendedName>
    <alternativeName>
        <fullName evidence="9">Nicalin</fullName>
    </alternativeName>
    <alternativeName>
        <fullName>Nicastrin-like protein</fullName>
    </alternativeName>
</protein>